<evidence type="ECO:0000255" key="1">
    <source>
        <dbReference type="HAMAP-Rule" id="MF_00435"/>
    </source>
</evidence>
<evidence type="ECO:0000255" key="2">
    <source>
        <dbReference type="PROSITE-ProRule" id="PRU01197"/>
    </source>
</evidence>
<evidence type="ECO:0000255" key="3">
    <source>
        <dbReference type="PROSITE-ProRule" id="PRU01198"/>
    </source>
</evidence>
<keyword id="KW-0028">Amino-acid biosynthesis</keyword>
<keyword id="KW-0100">Branched-chain amino acid biosynthesis</keyword>
<keyword id="KW-0460">Magnesium</keyword>
<keyword id="KW-0479">Metal-binding</keyword>
<keyword id="KW-0521">NADP</keyword>
<keyword id="KW-0560">Oxidoreductase</keyword>
<feature type="chain" id="PRO_1000206088" description="Ketol-acid reductoisomerase (NADP(+))">
    <location>
        <begin position="1"/>
        <end position="335"/>
    </location>
</feature>
<feature type="domain" description="KARI N-terminal Rossmann" evidence="2">
    <location>
        <begin position="5"/>
        <end position="185"/>
    </location>
</feature>
<feature type="domain" description="KARI C-terminal knotted" evidence="3">
    <location>
        <begin position="186"/>
        <end position="331"/>
    </location>
</feature>
<feature type="active site" evidence="1">
    <location>
        <position position="111"/>
    </location>
</feature>
<feature type="binding site" evidence="1">
    <location>
        <begin position="28"/>
        <end position="31"/>
    </location>
    <ligand>
        <name>NADP(+)</name>
        <dbReference type="ChEBI" id="CHEBI:58349"/>
    </ligand>
</feature>
<feature type="binding site" evidence="1">
    <location>
        <position position="56"/>
    </location>
    <ligand>
        <name>NADP(+)</name>
        <dbReference type="ChEBI" id="CHEBI:58349"/>
    </ligand>
</feature>
<feature type="binding site" evidence="1">
    <location>
        <begin position="86"/>
        <end position="89"/>
    </location>
    <ligand>
        <name>NADP(+)</name>
        <dbReference type="ChEBI" id="CHEBI:58349"/>
    </ligand>
</feature>
<feature type="binding site" evidence="1">
    <location>
        <position position="137"/>
    </location>
    <ligand>
        <name>NADP(+)</name>
        <dbReference type="ChEBI" id="CHEBI:58349"/>
    </ligand>
</feature>
<feature type="binding site" evidence="1">
    <location>
        <position position="194"/>
    </location>
    <ligand>
        <name>Mg(2+)</name>
        <dbReference type="ChEBI" id="CHEBI:18420"/>
        <label>1</label>
    </ligand>
</feature>
<feature type="binding site" evidence="1">
    <location>
        <position position="194"/>
    </location>
    <ligand>
        <name>Mg(2+)</name>
        <dbReference type="ChEBI" id="CHEBI:18420"/>
        <label>2</label>
    </ligand>
</feature>
<feature type="binding site" evidence="1">
    <location>
        <position position="198"/>
    </location>
    <ligand>
        <name>Mg(2+)</name>
        <dbReference type="ChEBI" id="CHEBI:18420"/>
        <label>1</label>
    </ligand>
</feature>
<feature type="binding site" evidence="1">
    <location>
        <position position="230"/>
    </location>
    <ligand>
        <name>Mg(2+)</name>
        <dbReference type="ChEBI" id="CHEBI:18420"/>
        <label>2</label>
    </ligand>
</feature>
<feature type="binding site" evidence="1">
    <location>
        <position position="234"/>
    </location>
    <ligand>
        <name>Mg(2+)</name>
        <dbReference type="ChEBI" id="CHEBI:18420"/>
        <label>2</label>
    </ligand>
</feature>
<feature type="binding site" evidence="1">
    <location>
        <position position="255"/>
    </location>
    <ligand>
        <name>substrate</name>
    </ligand>
</feature>
<dbReference type="EC" id="1.1.1.86" evidence="1"/>
<dbReference type="EMBL" id="CP001401">
    <property type="protein sequence ID" value="ACP55549.1"/>
    <property type="molecule type" value="Genomic_DNA"/>
</dbReference>
<dbReference type="RefSeq" id="WP_012711549.1">
    <property type="nucleotide sequence ID" value="NC_012632.1"/>
</dbReference>
<dbReference type="SMR" id="C3N6C4"/>
<dbReference type="GeneID" id="84061866"/>
<dbReference type="KEGG" id="sim:M1627_1671"/>
<dbReference type="HOGENOM" id="CLU_033821_0_1_2"/>
<dbReference type="UniPathway" id="UPA00047">
    <property type="reaction ID" value="UER00056"/>
</dbReference>
<dbReference type="UniPathway" id="UPA00049">
    <property type="reaction ID" value="UER00060"/>
</dbReference>
<dbReference type="Proteomes" id="UP000002307">
    <property type="component" value="Chromosome"/>
</dbReference>
<dbReference type="GO" id="GO:0004455">
    <property type="term" value="F:ketol-acid reductoisomerase activity"/>
    <property type="evidence" value="ECO:0007669"/>
    <property type="project" value="UniProtKB-UniRule"/>
</dbReference>
<dbReference type="GO" id="GO:0000287">
    <property type="term" value="F:magnesium ion binding"/>
    <property type="evidence" value="ECO:0007669"/>
    <property type="project" value="UniProtKB-UniRule"/>
</dbReference>
<dbReference type="GO" id="GO:0050661">
    <property type="term" value="F:NADP binding"/>
    <property type="evidence" value="ECO:0007669"/>
    <property type="project" value="InterPro"/>
</dbReference>
<dbReference type="GO" id="GO:0009097">
    <property type="term" value="P:isoleucine biosynthetic process"/>
    <property type="evidence" value="ECO:0007669"/>
    <property type="project" value="UniProtKB-UniRule"/>
</dbReference>
<dbReference type="GO" id="GO:0009099">
    <property type="term" value="P:L-valine biosynthetic process"/>
    <property type="evidence" value="ECO:0007669"/>
    <property type="project" value="UniProtKB-UniRule"/>
</dbReference>
<dbReference type="FunFam" id="3.40.50.720:FF:000023">
    <property type="entry name" value="Ketol-acid reductoisomerase (NADP(+))"/>
    <property type="match status" value="1"/>
</dbReference>
<dbReference type="Gene3D" id="6.10.240.10">
    <property type="match status" value="1"/>
</dbReference>
<dbReference type="Gene3D" id="3.40.50.720">
    <property type="entry name" value="NAD(P)-binding Rossmann-like Domain"/>
    <property type="match status" value="1"/>
</dbReference>
<dbReference type="HAMAP" id="MF_00435">
    <property type="entry name" value="IlvC"/>
    <property type="match status" value="1"/>
</dbReference>
<dbReference type="InterPro" id="IPR008927">
    <property type="entry name" value="6-PGluconate_DH-like_C_sf"/>
</dbReference>
<dbReference type="InterPro" id="IPR013023">
    <property type="entry name" value="KARI"/>
</dbReference>
<dbReference type="InterPro" id="IPR000506">
    <property type="entry name" value="KARI_C"/>
</dbReference>
<dbReference type="InterPro" id="IPR013116">
    <property type="entry name" value="KARI_N"/>
</dbReference>
<dbReference type="InterPro" id="IPR014359">
    <property type="entry name" value="KARI_prok"/>
</dbReference>
<dbReference type="InterPro" id="IPR036291">
    <property type="entry name" value="NAD(P)-bd_dom_sf"/>
</dbReference>
<dbReference type="NCBIfam" id="TIGR00465">
    <property type="entry name" value="ilvC"/>
    <property type="match status" value="1"/>
</dbReference>
<dbReference type="NCBIfam" id="NF004017">
    <property type="entry name" value="PRK05479.1"/>
    <property type="match status" value="1"/>
</dbReference>
<dbReference type="PANTHER" id="PTHR21371">
    <property type="entry name" value="KETOL-ACID REDUCTOISOMERASE, MITOCHONDRIAL"/>
    <property type="match status" value="1"/>
</dbReference>
<dbReference type="PANTHER" id="PTHR21371:SF1">
    <property type="entry name" value="KETOL-ACID REDUCTOISOMERASE, MITOCHONDRIAL"/>
    <property type="match status" value="1"/>
</dbReference>
<dbReference type="Pfam" id="PF01450">
    <property type="entry name" value="KARI_C"/>
    <property type="match status" value="1"/>
</dbReference>
<dbReference type="Pfam" id="PF07991">
    <property type="entry name" value="KARI_N"/>
    <property type="match status" value="1"/>
</dbReference>
<dbReference type="PIRSF" id="PIRSF000116">
    <property type="entry name" value="IlvC_gammaproteo"/>
    <property type="match status" value="1"/>
</dbReference>
<dbReference type="SUPFAM" id="SSF48179">
    <property type="entry name" value="6-phosphogluconate dehydrogenase C-terminal domain-like"/>
    <property type="match status" value="1"/>
</dbReference>
<dbReference type="SUPFAM" id="SSF51735">
    <property type="entry name" value="NAD(P)-binding Rossmann-fold domains"/>
    <property type="match status" value="1"/>
</dbReference>
<dbReference type="PROSITE" id="PS51851">
    <property type="entry name" value="KARI_C"/>
    <property type="match status" value="1"/>
</dbReference>
<dbReference type="PROSITE" id="PS51850">
    <property type="entry name" value="KARI_N"/>
    <property type="match status" value="1"/>
</dbReference>
<gene>
    <name evidence="1" type="primary">ilvC</name>
    <name type="ordered locus">M1627_1671</name>
</gene>
<reference key="1">
    <citation type="journal article" date="2009" name="Proc. Natl. Acad. Sci. U.S.A.">
        <title>Biogeography of the Sulfolobus islandicus pan-genome.</title>
        <authorList>
            <person name="Reno M.L."/>
            <person name="Held N.L."/>
            <person name="Fields C.J."/>
            <person name="Burke P.V."/>
            <person name="Whitaker R.J."/>
        </authorList>
    </citation>
    <scope>NUCLEOTIDE SEQUENCE [LARGE SCALE GENOMIC DNA]</scope>
    <source>
        <strain>M.16.27</strain>
    </source>
</reference>
<comment type="function">
    <text evidence="1">Involved in the biosynthesis of branched-chain amino acids (BCAA). Catalyzes an alkyl-migration followed by a ketol-acid reduction of (S)-2-acetolactate (S2AL) to yield (R)-2,3-dihydroxy-isovalerate. In the isomerase reaction, S2AL is rearranged via a Mg-dependent methyl migration to produce 3-hydroxy-3-methyl-2-ketobutyrate (HMKB). In the reductase reaction, this 2-ketoacid undergoes a metal-dependent reduction by NADPH to yield (R)-2,3-dihydroxy-isovalerate.</text>
</comment>
<comment type="catalytic activity">
    <reaction evidence="1">
        <text>(2R)-2,3-dihydroxy-3-methylbutanoate + NADP(+) = (2S)-2-acetolactate + NADPH + H(+)</text>
        <dbReference type="Rhea" id="RHEA:22068"/>
        <dbReference type="ChEBI" id="CHEBI:15378"/>
        <dbReference type="ChEBI" id="CHEBI:49072"/>
        <dbReference type="ChEBI" id="CHEBI:57783"/>
        <dbReference type="ChEBI" id="CHEBI:58349"/>
        <dbReference type="ChEBI" id="CHEBI:58476"/>
        <dbReference type="EC" id="1.1.1.86"/>
    </reaction>
</comment>
<comment type="catalytic activity">
    <reaction evidence="1">
        <text>(2R,3R)-2,3-dihydroxy-3-methylpentanoate + NADP(+) = (S)-2-ethyl-2-hydroxy-3-oxobutanoate + NADPH + H(+)</text>
        <dbReference type="Rhea" id="RHEA:13493"/>
        <dbReference type="ChEBI" id="CHEBI:15378"/>
        <dbReference type="ChEBI" id="CHEBI:49256"/>
        <dbReference type="ChEBI" id="CHEBI:49258"/>
        <dbReference type="ChEBI" id="CHEBI:57783"/>
        <dbReference type="ChEBI" id="CHEBI:58349"/>
        <dbReference type="EC" id="1.1.1.86"/>
    </reaction>
</comment>
<comment type="cofactor">
    <cofactor evidence="1">
        <name>Mg(2+)</name>
        <dbReference type="ChEBI" id="CHEBI:18420"/>
    </cofactor>
    <text evidence="1">Binds 2 magnesium ions per subunit.</text>
</comment>
<comment type="pathway">
    <text evidence="1">Amino-acid biosynthesis; L-isoleucine biosynthesis; L-isoleucine from 2-oxobutanoate: step 2/4.</text>
</comment>
<comment type="pathway">
    <text evidence="1">Amino-acid biosynthesis; L-valine biosynthesis; L-valine from pyruvate: step 2/4.</text>
</comment>
<comment type="similarity">
    <text evidence="1">Belongs to the ketol-acid reductoisomerase family.</text>
</comment>
<sequence>MKSTSKIYTDKDSNLDVIKGKRIAVLGYGSQGRAWAQNLRDSGLNVVVGLEREGKSWELAKSDGIIPLHTKDAVKDADIIIFLVPDMVQRTLWLESVQPYMKKGADLVFAHGFNIHYKLIEPPKDSDVYMIAPKGPGPTVREYYKAGGGVPALVAIQQDVSGTALQKALAIAKGIGATRAGVIPTTFKEETETDLFGEQVILVGGIMELMKAAFETLVEEGYQPEVAYFETINELKMLVDLVYEKGITGMLKAVSDTAKYGGMTVGKFVINEDVRKRMKEALQRIKSGKFAEEWVEEYGRGMPTVVNGLSQVQNSLEEKIGNQLKDLIQKGKPKS</sequence>
<organism>
    <name type="scientific">Saccharolobus islandicus (strain M.16.27)</name>
    <name type="common">Sulfolobus islandicus</name>
    <dbReference type="NCBI Taxonomy" id="427318"/>
    <lineage>
        <taxon>Archaea</taxon>
        <taxon>Thermoproteota</taxon>
        <taxon>Thermoprotei</taxon>
        <taxon>Sulfolobales</taxon>
        <taxon>Sulfolobaceae</taxon>
        <taxon>Saccharolobus</taxon>
    </lineage>
</organism>
<protein>
    <recommendedName>
        <fullName evidence="1">Ketol-acid reductoisomerase (NADP(+))</fullName>
        <shortName evidence="1">KARI</shortName>
        <ecNumber evidence="1">1.1.1.86</ecNumber>
    </recommendedName>
    <alternativeName>
        <fullName evidence="1">Acetohydroxy-acid isomeroreductase</fullName>
        <shortName evidence="1">AHIR</shortName>
    </alternativeName>
    <alternativeName>
        <fullName evidence="1">Alpha-keto-beta-hydroxylacyl reductoisomerase</fullName>
    </alternativeName>
    <alternativeName>
        <fullName evidence="1">Ketol-acid reductoisomerase type 1</fullName>
    </alternativeName>
    <alternativeName>
        <fullName evidence="1">Ketol-acid reductoisomerase type I</fullName>
    </alternativeName>
</protein>
<accession>C3N6C4</accession>
<name>ILVC_SACI3</name>
<proteinExistence type="inferred from homology"/>